<sequence length="203" mass="23261">MAHGPRYRVPFRRRREGKTNYRKRLKLLKSGKPRLVVRKSLNHHIAQIIVYDPKGDRTLVSAHTRELIRDFGWKGHCGNTPSAYLLGLLIGYKAKKAGIEEAILDIGLHPPVRGSSVFAVLKGAVDAGLNVPHSPEIFPEDYRIRGEHIAEYARMLKEQDEEKFRRQFGGYLEKGLDPEKLPEHFDEVKARIIEKFESEGARE</sequence>
<comment type="function">
    <text evidence="1">This is one of the proteins that bind and probably mediate the attachment of the 5S RNA into the large ribosomal subunit, where it forms part of the central protuberance.</text>
</comment>
<comment type="subunit">
    <text evidence="1">Part of the 50S ribosomal subunit. Contacts the 5S and 23S rRNAs.</text>
</comment>
<comment type="similarity">
    <text evidence="1">Belongs to the universal ribosomal protein uL18 family.</text>
</comment>
<dbReference type="EMBL" id="AJ248284">
    <property type="protein sequence ID" value="CAB49244.1"/>
    <property type="molecule type" value="Genomic_DNA"/>
</dbReference>
<dbReference type="EMBL" id="HE613800">
    <property type="protein sequence ID" value="CCE69699.1"/>
    <property type="molecule type" value="Genomic_DNA"/>
</dbReference>
<dbReference type="PIR" id="E75145">
    <property type="entry name" value="E75145"/>
</dbReference>
<dbReference type="RefSeq" id="WP_010867444.1">
    <property type="nucleotide sequence ID" value="NC_000868.1"/>
</dbReference>
<dbReference type="SMR" id="Q9V1V4"/>
<dbReference type="STRING" id="272844.PAB2135"/>
<dbReference type="KEGG" id="pab:PAB2135"/>
<dbReference type="PATRIC" id="fig|272844.11.peg.343"/>
<dbReference type="eggNOG" id="arCOG04088">
    <property type="taxonomic scope" value="Archaea"/>
</dbReference>
<dbReference type="HOGENOM" id="CLU_056222_2_0_2"/>
<dbReference type="OrthoDB" id="8644at2157"/>
<dbReference type="PhylomeDB" id="Q9V1V4"/>
<dbReference type="Proteomes" id="UP000000810">
    <property type="component" value="Chromosome"/>
</dbReference>
<dbReference type="Proteomes" id="UP000009139">
    <property type="component" value="Chromosome"/>
</dbReference>
<dbReference type="GO" id="GO:0022625">
    <property type="term" value="C:cytosolic large ribosomal subunit"/>
    <property type="evidence" value="ECO:0007669"/>
    <property type="project" value="TreeGrafter"/>
</dbReference>
<dbReference type="GO" id="GO:0008097">
    <property type="term" value="F:5S rRNA binding"/>
    <property type="evidence" value="ECO:0007669"/>
    <property type="project" value="InterPro"/>
</dbReference>
<dbReference type="GO" id="GO:0003735">
    <property type="term" value="F:structural constituent of ribosome"/>
    <property type="evidence" value="ECO:0007669"/>
    <property type="project" value="InterPro"/>
</dbReference>
<dbReference type="GO" id="GO:0000027">
    <property type="term" value="P:ribosomal large subunit assembly"/>
    <property type="evidence" value="ECO:0007669"/>
    <property type="project" value="TreeGrafter"/>
</dbReference>
<dbReference type="GO" id="GO:0006412">
    <property type="term" value="P:translation"/>
    <property type="evidence" value="ECO:0007669"/>
    <property type="project" value="UniProtKB-UniRule"/>
</dbReference>
<dbReference type="CDD" id="cd00432">
    <property type="entry name" value="Ribosomal_L18_L5e"/>
    <property type="match status" value="1"/>
</dbReference>
<dbReference type="FunFam" id="3.30.420.100:FF:000008">
    <property type="entry name" value="50S ribosomal protein L18"/>
    <property type="match status" value="1"/>
</dbReference>
<dbReference type="Gene3D" id="3.30.420.100">
    <property type="match status" value="1"/>
</dbReference>
<dbReference type="HAMAP" id="MF_01337_A">
    <property type="entry name" value="Ribosomal_uL18_A"/>
    <property type="match status" value="1"/>
</dbReference>
<dbReference type="InterPro" id="IPR005485">
    <property type="entry name" value="Rbsml_uL18_euk"/>
</dbReference>
<dbReference type="NCBIfam" id="NF006342">
    <property type="entry name" value="PRK08569.1"/>
    <property type="match status" value="1"/>
</dbReference>
<dbReference type="PANTHER" id="PTHR23410:SF12">
    <property type="entry name" value="LARGE RIBOSOMAL SUBUNIT PROTEIN UL18"/>
    <property type="match status" value="1"/>
</dbReference>
<dbReference type="PANTHER" id="PTHR23410">
    <property type="entry name" value="RIBOSOMAL PROTEIN L5-RELATED"/>
    <property type="match status" value="1"/>
</dbReference>
<dbReference type="Pfam" id="PF17144">
    <property type="entry name" value="Ribosomal_L5e"/>
    <property type="match status" value="2"/>
</dbReference>
<dbReference type="PRINTS" id="PR00058">
    <property type="entry name" value="RIBOSOMALL5"/>
</dbReference>
<dbReference type="SUPFAM" id="SSF53137">
    <property type="entry name" value="Translational machinery components"/>
    <property type="match status" value="1"/>
</dbReference>
<protein>
    <recommendedName>
        <fullName evidence="1">Large ribosomal subunit protein uL18</fullName>
    </recommendedName>
    <alternativeName>
        <fullName evidence="2">50S ribosomal protein L18</fullName>
    </alternativeName>
</protein>
<organism>
    <name type="scientific">Pyrococcus abyssi (strain GE5 / Orsay)</name>
    <dbReference type="NCBI Taxonomy" id="272844"/>
    <lineage>
        <taxon>Archaea</taxon>
        <taxon>Methanobacteriati</taxon>
        <taxon>Methanobacteriota</taxon>
        <taxon>Thermococci</taxon>
        <taxon>Thermococcales</taxon>
        <taxon>Thermococcaceae</taxon>
        <taxon>Pyrococcus</taxon>
    </lineage>
</organism>
<evidence type="ECO:0000255" key="1">
    <source>
        <dbReference type="HAMAP-Rule" id="MF_01337"/>
    </source>
</evidence>
<evidence type="ECO:0000305" key="2"/>
<keyword id="KW-0687">Ribonucleoprotein</keyword>
<keyword id="KW-0689">Ribosomal protein</keyword>
<keyword id="KW-0694">RNA-binding</keyword>
<keyword id="KW-0699">rRNA-binding</keyword>
<gene>
    <name evidence="1" type="primary">rpl18</name>
    <name type="ordered locus">PYRAB03220</name>
    <name type="ORF">PAB2135</name>
</gene>
<proteinExistence type="inferred from homology"/>
<reference key="1">
    <citation type="journal article" date="2003" name="Mol. Microbiol.">
        <title>An integrated analysis of the genome of the hyperthermophilic archaeon Pyrococcus abyssi.</title>
        <authorList>
            <person name="Cohen G.N."/>
            <person name="Barbe V."/>
            <person name="Flament D."/>
            <person name="Galperin M."/>
            <person name="Heilig R."/>
            <person name="Lecompte O."/>
            <person name="Poch O."/>
            <person name="Prieur D."/>
            <person name="Querellou J."/>
            <person name="Ripp R."/>
            <person name="Thierry J.-C."/>
            <person name="Van der Oost J."/>
            <person name="Weissenbach J."/>
            <person name="Zivanovic Y."/>
            <person name="Forterre P."/>
        </authorList>
    </citation>
    <scope>NUCLEOTIDE SEQUENCE [LARGE SCALE GENOMIC DNA]</scope>
    <source>
        <strain>GE5 / Orsay</strain>
    </source>
</reference>
<reference key="2">
    <citation type="journal article" date="2012" name="Curr. Microbiol.">
        <title>Re-annotation of two hyperthermophilic archaea Pyrococcus abyssi GE5 and Pyrococcus furiosus DSM 3638.</title>
        <authorList>
            <person name="Gao J."/>
            <person name="Wang J."/>
        </authorList>
    </citation>
    <scope>GENOME REANNOTATION</scope>
    <source>
        <strain>GE5 / Orsay</strain>
    </source>
</reference>
<name>RL18_PYRAB</name>
<feature type="chain" id="PRO_0000131412" description="Large ribosomal subunit protein uL18">
    <location>
        <begin position="1"/>
        <end position="203"/>
    </location>
</feature>
<accession>Q9V1V4</accession>
<accession>G8ZHV6</accession>